<dbReference type="EC" id="6.3.2.8" evidence="1"/>
<dbReference type="EMBL" id="CU207366">
    <property type="protein sequence ID" value="CAL67721.1"/>
    <property type="molecule type" value="Genomic_DNA"/>
</dbReference>
<dbReference type="RefSeq" id="WP_011710624.1">
    <property type="nucleotide sequence ID" value="NC_008571.1"/>
</dbReference>
<dbReference type="SMR" id="A0M526"/>
<dbReference type="STRING" id="411154.GFO_2767"/>
<dbReference type="KEGG" id="gfo:GFO_2767"/>
<dbReference type="eggNOG" id="COG0773">
    <property type="taxonomic scope" value="Bacteria"/>
</dbReference>
<dbReference type="HOGENOM" id="CLU_028104_2_2_10"/>
<dbReference type="OrthoDB" id="9804126at2"/>
<dbReference type="UniPathway" id="UPA00219"/>
<dbReference type="Proteomes" id="UP000000755">
    <property type="component" value="Chromosome"/>
</dbReference>
<dbReference type="GO" id="GO:0005737">
    <property type="term" value="C:cytoplasm"/>
    <property type="evidence" value="ECO:0007669"/>
    <property type="project" value="UniProtKB-SubCell"/>
</dbReference>
<dbReference type="GO" id="GO:0005524">
    <property type="term" value="F:ATP binding"/>
    <property type="evidence" value="ECO:0007669"/>
    <property type="project" value="UniProtKB-UniRule"/>
</dbReference>
<dbReference type="GO" id="GO:0008763">
    <property type="term" value="F:UDP-N-acetylmuramate-L-alanine ligase activity"/>
    <property type="evidence" value="ECO:0007669"/>
    <property type="project" value="UniProtKB-UniRule"/>
</dbReference>
<dbReference type="GO" id="GO:0051301">
    <property type="term" value="P:cell division"/>
    <property type="evidence" value="ECO:0007669"/>
    <property type="project" value="UniProtKB-KW"/>
</dbReference>
<dbReference type="GO" id="GO:0071555">
    <property type="term" value="P:cell wall organization"/>
    <property type="evidence" value="ECO:0007669"/>
    <property type="project" value="UniProtKB-KW"/>
</dbReference>
<dbReference type="GO" id="GO:0009252">
    <property type="term" value="P:peptidoglycan biosynthetic process"/>
    <property type="evidence" value="ECO:0007669"/>
    <property type="project" value="UniProtKB-UniRule"/>
</dbReference>
<dbReference type="GO" id="GO:0008360">
    <property type="term" value="P:regulation of cell shape"/>
    <property type="evidence" value="ECO:0007669"/>
    <property type="project" value="UniProtKB-KW"/>
</dbReference>
<dbReference type="Gene3D" id="3.90.190.20">
    <property type="entry name" value="Mur ligase, C-terminal domain"/>
    <property type="match status" value="1"/>
</dbReference>
<dbReference type="Gene3D" id="3.40.1190.10">
    <property type="entry name" value="Mur-like, catalytic domain"/>
    <property type="match status" value="1"/>
</dbReference>
<dbReference type="Gene3D" id="3.40.50.720">
    <property type="entry name" value="NAD(P)-binding Rossmann-like Domain"/>
    <property type="match status" value="1"/>
</dbReference>
<dbReference type="HAMAP" id="MF_00046">
    <property type="entry name" value="MurC"/>
    <property type="match status" value="1"/>
</dbReference>
<dbReference type="InterPro" id="IPR036565">
    <property type="entry name" value="Mur-like_cat_sf"/>
</dbReference>
<dbReference type="InterPro" id="IPR004101">
    <property type="entry name" value="Mur_ligase_C"/>
</dbReference>
<dbReference type="InterPro" id="IPR036615">
    <property type="entry name" value="Mur_ligase_C_dom_sf"/>
</dbReference>
<dbReference type="InterPro" id="IPR013221">
    <property type="entry name" value="Mur_ligase_cen"/>
</dbReference>
<dbReference type="InterPro" id="IPR000713">
    <property type="entry name" value="Mur_ligase_N"/>
</dbReference>
<dbReference type="InterPro" id="IPR050061">
    <property type="entry name" value="MurCDEF_pg_biosynth"/>
</dbReference>
<dbReference type="InterPro" id="IPR005758">
    <property type="entry name" value="UDP-N-AcMur_Ala_ligase_MurC"/>
</dbReference>
<dbReference type="NCBIfam" id="TIGR01082">
    <property type="entry name" value="murC"/>
    <property type="match status" value="1"/>
</dbReference>
<dbReference type="PANTHER" id="PTHR43445:SF3">
    <property type="entry name" value="UDP-N-ACETYLMURAMATE--L-ALANINE LIGASE"/>
    <property type="match status" value="1"/>
</dbReference>
<dbReference type="PANTHER" id="PTHR43445">
    <property type="entry name" value="UDP-N-ACETYLMURAMATE--L-ALANINE LIGASE-RELATED"/>
    <property type="match status" value="1"/>
</dbReference>
<dbReference type="Pfam" id="PF01225">
    <property type="entry name" value="Mur_ligase"/>
    <property type="match status" value="1"/>
</dbReference>
<dbReference type="Pfam" id="PF02875">
    <property type="entry name" value="Mur_ligase_C"/>
    <property type="match status" value="1"/>
</dbReference>
<dbReference type="Pfam" id="PF08245">
    <property type="entry name" value="Mur_ligase_M"/>
    <property type="match status" value="1"/>
</dbReference>
<dbReference type="SUPFAM" id="SSF51984">
    <property type="entry name" value="MurCD N-terminal domain"/>
    <property type="match status" value="1"/>
</dbReference>
<dbReference type="SUPFAM" id="SSF53623">
    <property type="entry name" value="MurD-like peptide ligases, catalytic domain"/>
    <property type="match status" value="1"/>
</dbReference>
<dbReference type="SUPFAM" id="SSF53244">
    <property type="entry name" value="MurD-like peptide ligases, peptide-binding domain"/>
    <property type="match status" value="1"/>
</dbReference>
<organism>
    <name type="scientific">Christiangramia forsetii (strain DSM 17595 / CGMCC 1.15422 / KT0803)</name>
    <name type="common">Gramella forsetii</name>
    <dbReference type="NCBI Taxonomy" id="411154"/>
    <lineage>
        <taxon>Bacteria</taxon>
        <taxon>Pseudomonadati</taxon>
        <taxon>Bacteroidota</taxon>
        <taxon>Flavobacteriia</taxon>
        <taxon>Flavobacteriales</taxon>
        <taxon>Flavobacteriaceae</taxon>
        <taxon>Christiangramia</taxon>
    </lineage>
</organism>
<evidence type="ECO:0000255" key="1">
    <source>
        <dbReference type="HAMAP-Rule" id="MF_00046"/>
    </source>
</evidence>
<sequence>MKDLNHIKHFYFIGVGGIGMSALARYFKAKGNFVAGYDRTSTELTRMLEDENIEVNYEDDITIIPETILNNQENTLIVYTPAVPKDHKQFEFLKKKNFEVVKRAELLGMVTDQKYCLAVAGTHGKTTTTAILGHLLKETGAKVTAFLGGISEDIQSNLIMQGDKVVVVEADEFDRSFLKLSPNLAAITSMDADHLDIYGDKSELEKSFREFAAKVPEDGKLFVKNGLPVNGSSVGINDNSDFSAQNIRIEEGSYVFDLKTPSETIKNLKFNLPGNHNLLNAITALAMAIEYGTSIHDLTRALYSFKGVKRRFSYKIKKDHLVLIDDYAHHPTEISAVHQAVREMYPNKKVLAVFQPHLFSRTRDFAEDFASSLSDFDKVFLLDIYPARELPIEGISSAWLLDKISNTNKALIQKKNLSEMIKTEEAEVVVMMGAGDIGEEVEKVKKALLHEA</sequence>
<name>MURC_CHRFK</name>
<feature type="chain" id="PRO_0000336835" description="UDP-N-acetylmuramate--L-alanine ligase">
    <location>
        <begin position="1"/>
        <end position="452"/>
    </location>
</feature>
<feature type="binding site" evidence="1">
    <location>
        <begin position="121"/>
        <end position="127"/>
    </location>
    <ligand>
        <name>ATP</name>
        <dbReference type="ChEBI" id="CHEBI:30616"/>
    </ligand>
</feature>
<comment type="function">
    <text evidence="1">Cell wall formation.</text>
</comment>
<comment type="catalytic activity">
    <reaction evidence="1">
        <text>UDP-N-acetyl-alpha-D-muramate + L-alanine + ATP = UDP-N-acetyl-alpha-D-muramoyl-L-alanine + ADP + phosphate + H(+)</text>
        <dbReference type="Rhea" id="RHEA:23372"/>
        <dbReference type="ChEBI" id="CHEBI:15378"/>
        <dbReference type="ChEBI" id="CHEBI:30616"/>
        <dbReference type="ChEBI" id="CHEBI:43474"/>
        <dbReference type="ChEBI" id="CHEBI:57972"/>
        <dbReference type="ChEBI" id="CHEBI:70757"/>
        <dbReference type="ChEBI" id="CHEBI:83898"/>
        <dbReference type="ChEBI" id="CHEBI:456216"/>
        <dbReference type="EC" id="6.3.2.8"/>
    </reaction>
</comment>
<comment type="pathway">
    <text evidence="1">Cell wall biogenesis; peptidoglycan biosynthesis.</text>
</comment>
<comment type="subcellular location">
    <subcellularLocation>
        <location evidence="1">Cytoplasm</location>
    </subcellularLocation>
</comment>
<comment type="similarity">
    <text evidence="1">Belongs to the MurCDEF family.</text>
</comment>
<keyword id="KW-0067">ATP-binding</keyword>
<keyword id="KW-0131">Cell cycle</keyword>
<keyword id="KW-0132">Cell division</keyword>
<keyword id="KW-0133">Cell shape</keyword>
<keyword id="KW-0961">Cell wall biogenesis/degradation</keyword>
<keyword id="KW-0963">Cytoplasm</keyword>
<keyword id="KW-0436">Ligase</keyword>
<keyword id="KW-0547">Nucleotide-binding</keyword>
<keyword id="KW-0573">Peptidoglycan synthesis</keyword>
<gene>
    <name evidence="1" type="primary">murC</name>
    <name type="ordered locus">GFO_2767</name>
</gene>
<accession>A0M526</accession>
<protein>
    <recommendedName>
        <fullName evidence="1">UDP-N-acetylmuramate--L-alanine ligase</fullName>
        <ecNumber evidence="1">6.3.2.8</ecNumber>
    </recommendedName>
    <alternativeName>
        <fullName evidence="1">UDP-N-acetylmuramoyl-L-alanine synthetase</fullName>
    </alternativeName>
</protein>
<reference key="1">
    <citation type="journal article" date="2006" name="Environ. Microbiol.">
        <title>Whole genome analysis of the marine Bacteroidetes'Gramella forsetii' reveals adaptations to degradation of polymeric organic matter.</title>
        <authorList>
            <person name="Bauer M."/>
            <person name="Kube M."/>
            <person name="Teeling H."/>
            <person name="Richter M."/>
            <person name="Lombardot T."/>
            <person name="Allers E."/>
            <person name="Wuerdemann C.A."/>
            <person name="Quast C."/>
            <person name="Kuhl H."/>
            <person name="Knaust F."/>
            <person name="Woebken D."/>
            <person name="Bischof K."/>
            <person name="Mussmann M."/>
            <person name="Choudhuri J.V."/>
            <person name="Meyer F."/>
            <person name="Reinhardt R."/>
            <person name="Amann R.I."/>
            <person name="Gloeckner F.O."/>
        </authorList>
    </citation>
    <scope>NUCLEOTIDE SEQUENCE [LARGE SCALE GENOMIC DNA]</scope>
    <source>
        <strain>DSM 17595 / CGMCC 1.15422 / KT0803</strain>
    </source>
</reference>
<proteinExistence type="inferred from homology"/>